<dbReference type="EMBL" id="AK143864">
    <property type="protein sequence ID" value="BAE25573.1"/>
    <property type="molecule type" value="mRNA"/>
</dbReference>
<dbReference type="EMBL" id="AK171624">
    <property type="protein sequence ID" value="BAE42570.1"/>
    <property type="molecule type" value="mRNA"/>
</dbReference>
<dbReference type="EMBL" id="CT033749">
    <property type="status" value="NOT_ANNOTATED_CDS"/>
    <property type="molecule type" value="Genomic_DNA"/>
</dbReference>
<dbReference type="CCDS" id="CCDS37692.1"/>
<dbReference type="RefSeq" id="NP_001028539.1">
    <property type="nucleotide sequence ID" value="NM_001033367.3"/>
</dbReference>
<dbReference type="RefSeq" id="XP_006524409.1">
    <property type="nucleotide sequence ID" value="XM_006524346.5"/>
</dbReference>
<dbReference type="RefSeq" id="XP_017172979.1">
    <property type="nucleotide sequence ID" value="XM_017317490.1"/>
</dbReference>
<dbReference type="RefSeq" id="XP_017172980.1">
    <property type="nucleotide sequence ID" value="XM_017317491.2"/>
</dbReference>
<dbReference type="PDB" id="3JBL">
    <property type="method" value="EM"/>
    <property type="resolution" value="4.50 A"/>
    <property type="chains" value="A/B/C/D/E/F/G/H/I/J/K=93-1024"/>
</dbReference>
<dbReference type="PDB" id="4KXF">
    <property type="method" value="X-ray"/>
    <property type="resolution" value="3.20 A"/>
    <property type="chains" value="B/D/F/H/K/L/N/P=1-1024"/>
</dbReference>
<dbReference type="PDB" id="5AJ2">
    <property type="method" value="EM"/>
    <property type="resolution" value="40.00 A"/>
    <property type="chains" value="A=1-355, B=356-580, C=580-1024"/>
</dbReference>
<dbReference type="PDB" id="6B5B">
    <property type="method" value="EM"/>
    <property type="resolution" value="5.20 A"/>
    <property type="chains" value="B/C=1-1024"/>
</dbReference>
<dbReference type="PDBsum" id="3JBL"/>
<dbReference type="PDBsum" id="4KXF"/>
<dbReference type="PDBsum" id="5AJ2"/>
<dbReference type="PDBsum" id="6B5B"/>
<dbReference type="EMDB" id="EMD-2901"/>
<dbReference type="EMDB" id="EMD-6458"/>
<dbReference type="EMDB" id="EMD-6459"/>
<dbReference type="EMDB" id="EMD-6460"/>
<dbReference type="EMDB" id="EMD-7055"/>
<dbReference type="SMR" id="Q3UP24"/>
<dbReference type="CORUM" id="Q3UP24"/>
<dbReference type="FunCoup" id="Q3UP24">
    <property type="interactions" value="203"/>
</dbReference>
<dbReference type="IntAct" id="Q3UP24">
    <property type="interactions" value="9"/>
</dbReference>
<dbReference type="STRING" id="10090.ENSMUSP00000059637"/>
<dbReference type="BindingDB" id="Q3UP24"/>
<dbReference type="ChEMBL" id="CHEMBL4295841"/>
<dbReference type="iPTMnet" id="Q3UP24"/>
<dbReference type="PhosphoSitePlus" id="Q3UP24"/>
<dbReference type="PaxDb" id="10090-ENSMUSP00000059637"/>
<dbReference type="PeptideAtlas" id="Q3UP24"/>
<dbReference type="ProteomicsDB" id="293579"/>
<dbReference type="Antibodypedia" id="14265">
    <property type="antibodies" value="341 antibodies from 37 providers"/>
</dbReference>
<dbReference type="DNASU" id="268973"/>
<dbReference type="Ensembl" id="ENSMUST00000052124.9">
    <property type="protein sequence ID" value="ENSMUSP00000059637.8"/>
    <property type="gene ID" value="ENSMUSG00000039193.10"/>
</dbReference>
<dbReference type="GeneID" id="268973"/>
<dbReference type="KEGG" id="mmu:268973"/>
<dbReference type="UCSC" id="uc008doc.1">
    <property type="organism name" value="mouse"/>
</dbReference>
<dbReference type="AGR" id="MGI:3036243"/>
<dbReference type="CTD" id="58484"/>
<dbReference type="MGI" id="MGI:3036243">
    <property type="gene designation" value="Nlrc4"/>
</dbReference>
<dbReference type="VEuPathDB" id="HostDB:ENSMUSG00000039193"/>
<dbReference type="eggNOG" id="ENOG502QWRJ">
    <property type="taxonomic scope" value="Eukaryota"/>
</dbReference>
<dbReference type="GeneTree" id="ENSGT00940000161744"/>
<dbReference type="HOGENOM" id="CLU_011683_0_0_1"/>
<dbReference type="InParanoid" id="Q3UP24"/>
<dbReference type="OMA" id="KDWYHTP"/>
<dbReference type="OrthoDB" id="47038at9989"/>
<dbReference type="PhylomeDB" id="Q3UP24"/>
<dbReference type="TreeFam" id="TF336864"/>
<dbReference type="BioGRID-ORCS" id="268973">
    <property type="hits" value="2 hits in 77 CRISPR screens"/>
</dbReference>
<dbReference type="ChiTaRS" id="Nlrc4">
    <property type="organism name" value="mouse"/>
</dbReference>
<dbReference type="EvolutionaryTrace" id="Q3UP24"/>
<dbReference type="PRO" id="PR:Q3UP24"/>
<dbReference type="Proteomes" id="UP000000589">
    <property type="component" value="Chromosome 17"/>
</dbReference>
<dbReference type="RNAct" id="Q3UP24">
    <property type="molecule type" value="protein"/>
</dbReference>
<dbReference type="Bgee" id="ENSMUSG00000039193">
    <property type="expression patterns" value="Expressed in jejunum and 36 other cell types or tissues"/>
</dbReference>
<dbReference type="ExpressionAtlas" id="Q3UP24">
    <property type="expression patterns" value="baseline and differential"/>
</dbReference>
<dbReference type="GO" id="GO:0005829">
    <property type="term" value="C:cytosol"/>
    <property type="evidence" value="ECO:0000314"/>
    <property type="project" value="UniProtKB"/>
</dbReference>
<dbReference type="GO" id="GO:0043231">
    <property type="term" value="C:intracellular membrane-bounded organelle"/>
    <property type="evidence" value="ECO:0007669"/>
    <property type="project" value="Ensembl"/>
</dbReference>
<dbReference type="GO" id="GO:0072557">
    <property type="term" value="C:IPAF inflammasome complex"/>
    <property type="evidence" value="ECO:0000314"/>
    <property type="project" value="UniProtKB"/>
</dbReference>
<dbReference type="GO" id="GO:0005886">
    <property type="term" value="C:plasma membrane"/>
    <property type="evidence" value="ECO:0007669"/>
    <property type="project" value="Ensembl"/>
</dbReference>
<dbReference type="GO" id="GO:0005524">
    <property type="term" value="F:ATP binding"/>
    <property type="evidence" value="ECO:0000250"/>
    <property type="project" value="HGNC-UCL"/>
</dbReference>
<dbReference type="GO" id="GO:0089720">
    <property type="term" value="F:caspase binding"/>
    <property type="evidence" value="ECO:0007669"/>
    <property type="project" value="Ensembl"/>
</dbReference>
<dbReference type="GO" id="GO:0061133">
    <property type="term" value="F:endopeptidase activator activity"/>
    <property type="evidence" value="ECO:0007669"/>
    <property type="project" value="Ensembl"/>
</dbReference>
<dbReference type="GO" id="GO:0042802">
    <property type="term" value="F:identical protein binding"/>
    <property type="evidence" value="ECO:0000353"/>
    <property type="project" value="IntAct"/>
</dbReference>
<dbReference type="GO" id="GO:0042803">
    <property type="term" value="F:protein homodimerization activity"/>
    <property type="evidence" value="ECO:0000250"/>
    <property type="project" value="HGNC-UCL"/>
</dbReference>
<dbReference type="GO" id="GO:0002218">
    <property type="term" value="P:activation of innate immune response"/>
    <property type="evidence" value="ECO:0000315"/>
    <property type="project" value="UniProtKB"/>
</dbReference>
<dbReference type="GO" id="GO:0006915">
    <property type="term" value="P:apoptotic process"/>
    <property type="evidence" value="ECO:0007669"/>
    <property type="project" value="UniProtKB-KW"/>
</dbReference>
<dbReference type="GO" id="GO:0042742">
    <property type="term" value="P:defense response to bacterium"/>
    <property type="evidence" value="ECO:0000315"/>
    <property type="project" value="UniProtKB"/>
</dbReference>
<dbReference type="GO" id="GO:0016045">
    <property type="term" value="P:detection of bacterium"/>
    <property type="evidence" value="ECO:0000315"/>
    <property type="project" value="UniProtKB"/>
</dbReference>
<dbReference type="GO" id="GO:0006954">
    <property type="term" value="P:inflammatory response"/>
    <property type="evidence" value="ECO:0000315"/>
    <property type="project" value="UniProtKB"/>
</dbReference>
<dbReference type="GO" id="GO:0045087">
    <property type="term" value="P:innate immune response"/>
    <property type="evidence" value="ECO:0007669"/>
    <property type="project" value="UniProtKB-KW"/>
</dbReference>
<dbReference type="GO" id="GO:0043065">
    <property type="term" value="P:positive regulation of apoptotic process"/>
    <property type="evidence" value="ECO:0007669"/>
    <property type="project" value="Ensembl"/>
</dbReference>
<dbReference type="GO" id="GO:0032731">
    <property type="term" value="P:positive regulation of interleukin-1 beta production"/>
    <property type="evidence" value="ECO:0000315"/>
    <property type="project" value="UniProtKB"/>
</dbReference>
<dbReference type="GO" id="GO:0010954">
    <property type="term" value="P:positive regulation of protein processing"/>
    <property type="evidence" value="ECO:0007669"/>
    <property type="project" value="Ensembl"/>
</dbReference>
<dbReference type="GO" id="GO:0051260">
    <property type="term" value="P:protein homooligomerization"/>
    <property type="evidence" value="ECO:0000314"/>
    <property type="project" value="UniProtKB"/>
</dbReference>
<dbReference type="GO" id="GO:0070269">
    <property type="term" value="P:pyroptotic inflammatory response"/>
    <property type="evidence" value="ECO:0000315"/>
    <property type="project" value="UniProtKB"/>
</dbReference>
<dbReference type="GO" id="GO:0042981">
    <property type="term" value="P:regulation of apoptotic process"/>
    <property type="evidence" value="ECO:0000315"/>
    <property type="project" value="MGI"/>
</dbReference>
<dbReference type="CDD" id="cd01671">
    <property type="entry name" value="CARD"/>
    <property type="match status" value="1"/>
</dbReference>
<dbReference type="FunFam" id="1.10.533.10:FF:000068">
    <property type="entry name" value="NLR family CARD domain containing 4"/>
    <property type="match status" value="1"/>
</dbReference>
<dbReference type="FunFam" id="3.80.10.10:FF:000409">
    <property type="entry name" value="NLR family CARD domain containing 4"/>
    <property type="match status" value="1"/>
</dbReference>
<dbReference type="FunFam" id="1.10.1900.50:FF:000001">
    <property type="entry name" value="NLR family CARD domain-containing protein 4"/>
    <property type="match status" value="1"/>
</dbReference>
<dbReference type="FunFam" id="3.40.50.300:FF:001292">
    <property type="entry name" value="NLR family CARD domain-containing protein 4"/>
    <property type="match status" value="1"/>
</dbReference>
<dbReference type="Gene3D" id="1.10.1900.50">
    <property type="match status" value="1"/>
</dbReference>
<dbReference type="Gene3D" id="1.10.533.10">
    <property type="entry name" value="Death Domain, Fas"/>
    <property type="match status" value="1"/>
</dbReference>
<dbReference type="Gene3D" id="3.40.50.300">
    <property type="entry name" value="P-loop containing nucleotide triphosphate hydrolases"/>
    <property type="match status" value="1"/>
</dbReference>
<dbReference type="Gene3D" id="3.80.10.10">
    <property type="entry name" value="Ribonuclease Inhibitor"/>
    <property type="match status" value="2"/>
</dbReference>
<dbReference type="InterPro" id="IPR001315">
    <property type="entry name" value="CARD"/>
</dbReference>
<dbReference type="InterPro" id="IPR011029">
    <property type="entry name" value="DEATH-like_dom_sf"/>
</dbReference>
<dbReference type="InterPro" id="IPR032675">
    <property type="entry name" value="LRR_dom_sf"/>
</dbReference>
<dbReference type="InterPro" id="IPR007111">
    <property type="entry name" value="NACHT_NTPase"/>
</dbReference>
<dbReference type="InterPro" id="IPR042220">
    <property type="entry name" value="NLRC4"/>
</dbReference>
<dbReference type="InterPro" id="IPR053882">
    <property type="entry name" value="Nlrc4-like_WHD"/>
</dbReference>
<dbReference type="InterPro" id="IPR040535">
    <property type="entry name" value="NLRC4_HD"/>
</dbReference>
<dbReference type="InterPro" id="IPR027417">
    <property type="entry name" value="P-loop_NTPase"/>
</dbReference>
<dbReference type="PANTHER" id="PTHR47688">
    <property type="entry name" value="NLR FAMILY CARD DOMAIN-CONTAINING PROTEIN 4"/>
    <property type="match status" value="1"/>
</dbReference>
<dbReference type="PANTHER" id="PTHR47688:SF1">
    <property type="entry name" value="NLR FAMILY CARD DOMAIN-CONTAINING PROTEIN 4"/>
    <property type="match status" value="1"/>
</dbReference>
<dbReference type="Pfam" id="PF00619">
    <property type="entry name" value="CARD"/>
    <property type="match status" value="1"/>
</dbReference>
<dbReference type="Pfam" id="PF05729">
    <property type="entry name" value="NACHT"/>
    <property type="match status" value="1"/>
</dbReference>
<dbReference type="Pfam" id="PF22524">
    <property type="entry name" value="Nlrc4-like_WHD"/>
    <property type="match status" value="1"/>
</dbReference>
<dbReference type="Pfam" id="PF17889">
    <property type="entry name" value="NLRC4_HD"/>
    <property type="match status" value="1"/>
</dbReference>
<dbReference type="SUPFAM" id="SSF47986">
    <property type="entry name" value="DEATH domain"/>
    <property type="match status" value="1"/>
</dbReference>
<dbReference type="SUPFAM" id="SSF52540">
    <property type="entry name" value="P-loop containing nucleoside triphosphate hydrolases"/>
    <property type="match status" value="1"/>
</dbReference>
<dbReference type="SUPFAM" id="SSF52047">
    <property type="entry name" value="RNI-like"/>
    <property type="match status" value="1"/>
</dbReference>
<dbReference type="PROSITE" id="PS50209">
    <property type="entry name" value="CARD"/>
    <property type="match status" value="1"/>
</dbReference>
<dbReference type="PROSITE" id="PS50837">
    <property type="entry name" value="NACHT"/>
    <property type="match status" value="1"/>
</dbReference>
<feature type="chain" id="PRO_0000419975" description="NLR family CARD domain-containing protein 4">
    <location>
        <begin position="1"/>
        <end position="1024"/>
    </location>
</feature>
<feature type="domain" description="CARD" evidence="2">
    <location>
        <begin position="1"/>
        <end position="88"/>
    </location>
</feature>
<feature type="domain" description="NACHT" evidence="3">
    <location>
        <begin position="163"/>
        <end position="476"/>
    </location>
</feature>
<feature type="repeat" description="LRR 1" evidence="20">
    <location>
        <begin position="578"/>
        <end position="598"/>
    </location>
</feature>
<feature type="repeat" description="LRR 2" evidence="20">
    <location>
        <begin position="656"/>
        <end position="679"/>
    </location>
</feature>
<feature type="repeat" description="LRR 3" evidence="20">
    <location>
        <begin position="735"/>
        <end position="758"/>
    </location>
</feature>
<feature type="repeat" description="LRR 4" evidence="20">
    <location>
        <begin position="762"/>
        <end position="785"/>
    </location>
</feature>
<feature type="repeat" description="LRR 5" evidence="20">
    <location>
        <begin position="787"/>
        <end position="812"/>
    </location>
</feature>
<feature type="repeat" description="LRR 6" evidence="20">
    <location>
        <begin position="824"/>
        <end position="847"/>
    </location>
</feature>
<feature type="repeat" description="LRR 7" evidence="20">
    <location>
        <begin position="848"/>
        <end position="870"/>
    </location>
</feature>
<feature type="repeat" description="LRR 8" evidence="20">
    <location>
        <begin position="878"/>
        <end position="902"/>
    </location>
</feature>
<feature type="repeat" description="LRR 9" evidence="20">
    <location>
        <begin position="911"/>
        <end position="933"/>
    </location>
</feature>
<feature type="repeat" description="LRR 10" evidence="20">
    <location>
        <begin position="936"/>
        <end position="963"/>
    </location>
</feature>
<feature type="repeat" description="LRR 11" evidence="20">
    <location>
        <begin position="965"/>
        <end position="985"/>
    </location>
</feature>
<feature type="repeat" description="LRR 12" evidence="20">
    <location>
        <begin position="999"/>
        <end position="1021"/>
    </location>
</feature>
<feature type="region of interest" description="Nucleotide-binding domain (NBD)">
    <location>
        <begin position="95"/>
        <end position="298"/>
    </location>
</feature>
<feature type="region of interest" description="Winged-helix domain (WHD)">
    <location>
        <begin position="356"/>
        <end position="463"/>
    </location>
</feature>
<feature type="binding site" evidence="20 27">
    <location>
        <position position="135"/>
    </location>
    <ligand>
        <name>ATP</name>
        <dbReference type="ChEBI" id="CHEBI:30616"/>
    </ligand>
</feature>
<feature type="binding site" evidence="20 27">
    <location>
        <begin position="172"/>
        <end position="177"/>
    </location>
    <ligand>
        <name>ATP</name>
        <dbReference type="ChEBI" id="CHEBI:30616"/>
    </ligand>
</feature>
<feature type="binding site" evidence="20 27">
    <location>
        <position position="443"/>
    </location>
    <ligand>
        <name>ATP</name>
        <dbReference type="ChEBI" id="CHEBI:30616"/>
    </ligand>
</feature>
<feature type="modified residue" description="Phosphoserine" evidence="19 20">
    <location>
        <position position="533"/>
    </location>
</feature>
<feature type="mutagenesis site" description="Constitutively active." evidence="20">
    <original>H</original>
    <variation>L</variation>
    <location>
        <position position="443"/>
    </location>
</feature>
<feature type="mutagenesis site" description="Abolishes phosphorylation and prevents activation of caspase-1 and pyroptosis in response to S.typhimurium." evidence="19">
    <original>S</original>
    <variation>A</variation>
    <location>
        <position position="533"/>
    </location>
</feature>
<feature type="mutagenesis site" description="Mimics phosphorylation; causes rapid macrophage pyroptosis without infection." evidence="19">
    <original>S</original>
    <variation>D</variation>
    <location>
        <position position="533"/>
    </location>
</feature>
<feature type="sequence conflict" description="In Ref. 1; BAE42570." evidence="25" ref="1">
    <original>N</original>
    <variation>S</variation>
    <location>
        <position position="99"/>
    </location>
</feature>
<feature type="sequence conflict" description="In Ref. 1; BAE42570." evidence="25" ref="1">
    <original>D</original>
    <variation>N</variation>
    <location>
        <position position="385"/>
    </location>
</feature>
<feature type="sequence conflict" description="In Ref. 1; BAE42570." evidence="25" ref="1">
    <original>H</original>
    <variation>Y</variation>
    <location>
        <position position="515"/>
    </location>
</feature>
<feature type="sequence conflict" description="In Ref. 1; BAE42570." evidence="25" ref="1">
    <original>N</original>
    <variation>S</variation>
    <location>
        <position position="670"/>
    </location>
</feature>
<feature type="sequence conflict" description="In Ref. 1; BAE42570." evidence="25" ref="1">
    <original>I</original>
    <variation>V</variation>
    <location>
        <position position="756"/>
    </location>
</feature>
<feature type="sequence conflict" description="In Ref. 1; BAE42570." evidence="25" ref="1">
    <original>N</original>
    <variation>S</variation>
    <location>
        <position position="782"/>
    </location>
</feature>
<feature type="sequence conflict" description="In Ref. 1; BAE42570." evidence="25" ref="1">
    <original>T</original>
    <variation>I</variation>
    <location>
        <position position="799"/>
    </location>
</feature>
<feature type="sequence conflict" description="In Ref. 1; BAE42570." evidence="25" ref="1">
    <original>C</original>
    <variation>R</variation>
    <location>
        <position position="948"/>
    </location>
</feature>
<feature type="helix" evidence="30">
    <location>
        <begin position="95"/>
        <end position="109"/>
    </location>
</feature>
<feature type="helix" evidence="30">
    <location>
        <begin position="112"/>
        <end position="115"/>
    </location>
</feature>
<feature type="turn" evidence="30">
    <location>
        <begin position="130"/>
        <end position="133"/>
    </location>
</feature>
<feature type="strand" evidence="30">
    <location>
        <begin position="139"/>
        <end position="142"/>
    </location>
</feature>
<feature type="strand" evidence="30">
    <location>
        <begin position="148"/>
        <end position="152"/>
    </location>
</feature>
<feature type="helix" evidence="30">
    <location>
        <begin position="154"/>
        <end position="159"/>
    </location>
</feature>
<feature type="strand" evidence="30">
    <location>
        <begin position="163"/>
        <end position="168"/>
    </location>
</feature>
<feature type="helix" evidence="30">
    <location>
        <begin position="175"/>
        <end position="188"/>
    </location>
</feature>
<feature type="helix" evidence="30">
    <location>
        <begin position="193"/>
        <end position="196"/>
    </location>
</feature>
<feature type="strand" evidence="30">
    <location>
        <begin position="198"/>
        <end position="204"/>
    </location>
</feature>
<feature type="helix" evidence="30">
    <location>
        <begin position="205"/>
        <end position="207"/>
    </location>
</feature>
<feature type="helix" evidence="30">
    <location>
        <begin position="212"/>
        <end position="220"/>
    </location>
</feature>
<feature type="helix" evidence="30">
    <location>
        <begin position="229"/>
        <end position="239"/>
    </location>
</feature>
<feature type="helix" evidence="30">
    <location>
        <begin position="240"/>
        <end position="242"/>
    </location>
</feature>
<feature type="strand" evidence="30">
    <location>
        <begin position="243"/>
        <end position="248"/>
    </location>
</feature>
<feature type="helix" evidence="30">
    <location>
        <begin position="250"/>
        <end position="252"/>
    </location>
</feature>
<feature type="turn" evidence="30">
    <location>
        <begin position="255"/>
        <end position="257"/>
    </location>
</feature>
<feature type="helix" evidence="30">
    <location>
        <begin position="259"/>
        <end position="266"/>
    </location>
</feature>
<feature type="turn" evidence="30">
    <location>
        <begin position="269"/>
        <end position="271"/>
    </location>
</feature>
<feature type="strand" evidence="30">
    <location>
        <begin position="274"/>
        <end position="278"/>
    </location>
</feature>
<feature type="helix" evidence="30">
    <location>
        <begin position="284"/>
        <end position="287"/>
    </location>
</feature>
<feature type="turn" evidence="30">
    <location>
        <begin position="288"/>
        <end position="290"/>
    </location>
</feature>
<feature type="strand" evidence="30">
    <location>
        <begin position="292"/>
        <end position="297"/>
    </location>
</feature>
<feature type="helix" evidence="30">
    <location>
        <begin position="302"/>
        <end position="312"/>
    </location>
</feature>
<feature type="helix" evidence="30">
    <location>
        <begin position="315"/>
        <end position="327"/>
    </location>
</feature>
<feature type="helix" evidence="30">
    <location>
        <begin position="329"/>
        <end position="334"/>
    </location>
</feature>
<feature type="helix" evidence="30">
    <location>
        <begin position="338"/>
        <end position="350"/>
    </location>
</feature>
<feature type="helix" evidence="30">
    <location>
        <begin position="359"/>
        <end position="374"/>
    </location>
</feature>
<feature type="helix" evidence="30">
    <location>
        <begin position="375"/>
        <end position="377"/>
    </location>
</feature>
<feature type="helix" evidence="30">
    <location>
        <begin position="386"/>
        <end position="403"/>
    </location>
</feature>
<feature type="helix" evidence="30">
    <location>
        <begin position="416"/>
        <end position="424"/>
    </location>
</feature>
<feature type="strand" evidence="30">
    <location>
        <begin position="426"/>
        <end position="429"/>
    </location>
</feature>
<feature type="helix" evidence="30">
    <location>
        <begin position="444"/>
        <end position="459"/>
    </location>
</feature>
<feature type="helix" evidence="30">
    <location>
        <begin position="464"/>
        <end position="475"/>
    </location>
</feature>
<feature type="helix" evidence="30">
    <location>
        <begin position="480"/>
        <end position="485"/>
    </location>
</feature>
<feature type="helix" evidence="30">
    <location>
        <begin position="488"/>
        <end position="497"/>
    </location>
</feature>
<feature type="helix" evidence="30">
    <location>
        <begin position="499"/>
        <end position="509"/>
    </location>
</feature>
<feature type="helix" evidence="30">
    <location>
        <begin position="519"/>
        <end position="521"/>
    </location>
</feature>
<feature type="helix" evidence="30">
    <location>
        <begin position="534"/>
        <end position="538"/>
    </location>
</feature>
<feature type="helix" evidence="30">
    <location>
        <begin position="542"/>
        <end position="565"/>
    </location>
</feature>
<feature type="helix" evidence="30">
    <location>
        <begin position="572"/>
        <end position="579"/>
    </location>
</feature>
<feature type="strand" evidence="30">
    <location>
        <begin position="583"/>
        <end position="589"/>
    </location>
</feature>
<feature type="helix" evidence="30">
    <location>
        <begin position="593"/>
        <end position="601"/>
    </location>
</feature>
<feature type="helix" evidence="30">
    <location>
        <begin position="603"/>
        <end position="608"/>
    </location>
</feature>
<feature type="strand" evidence="30">
    <location>
        <begin position="609"/>
        <end position="618"/>
    </location>
</feature>
<feature type="helix" evidence="30">
    <location>
        <begin position="646"/>
        <end position="654"/>
    </location>
</feature>
<feature type="strand" evidence="30">
    <location>
        <begin position="659"/>
        <end position="668"/>
    </location>
</feature>
<feature type="helix" evidence="30">
    <location>
        <begin position="674"/>
        <end position="684"/>
    </location>
</feature>
<feature type="strand" evidence="30">
    <location>
        <begin position="687"/>
        <end position="696"/>
    </location>
</feature>
<feature type="helix" evidence="30">
    <location>
        <begin position="703"/>
        <end position="707"/>
    </location>
</feature>
<feature type="strand" evidence="30">
    <location>
        <begin position="712"/>
        <end position="721"/>
    </location>
</feature>
<feature type="helix" evidence="30">
    <location>
        <begin position="726"/>
        <end position="734"/>
    </location>
</feature>
<feature type="strand" evidence="30">
    <location>
        <begin position="740"/>
        <end position="746"/>
    </location>
</feature>
<feature type="turn" evidence="30">
    <location>
        <begin position="755"/>
        <end position="758"/>
    </location>
</feature>
<feature type="strand" evidence="30">
    <location>
        <begin position="767"/>
        <end position="773"/>
    </location>
</feature>
<feature type="helix" evidence="30">
    <location>
        <begin position="777"/>
        <end position="787"/>
    </location>
</feature>
<feature type="strand" evidence="30">
    <location>
        <begin position="794"/>
        <end position="800"/>
    </location>
</feature>
<feature type="helix" evidence="30">
    <location>
        <begin position="807"/>
        <end position="816"/>
    </location>
</feature>
<feature type="strand" evidence="30">
    <location>
        <begin position="824"/>
        <end position="830"/>
    </location>
</feature>
<feature type="helix" evidence="30">
    <location>
        <begin position="834"/>
        <end position="843"/>
    </location>
</feature>
<feature type="helix" evidence="30">
    <location>
        <begin position="844"/>
        <end position="846"/>
    </location>
</feature>
<feature type="strand" evidence="30">
    <location>
        <begin position="852"/>
        <end position="854"/>
    </location>
</feature>
<feature type="helix" evidence="30">
    <location>
        <begin position="864"/>
        <end position="873"/>
    </location>
</feature>
<feature type="helix" evidence="30">
    <location>
        <begin position="874"/>
        <end position="877"/>
    </location>
</feature>
<feature type="strand" evidence="30">
    <location>
        <begin position="883"/>
        <end position="886"/>
    </location>
</feature>
<feature type="helix" evidence="30">
    <location>
        <begin position="892"/>
        <end position="895"/>
    </location>
</feature>
<feature type="helix" evidence="30">
    <location>
        <begin position="896"/>
        <end position="902"/>
    </location>
</feature>
<feature type="helix" evidence="30">
    <location>
        <begin position="903"/>
        <end position="905"/>
    </location>
</feature>
<feature type="strand" evidence="30">
    <location>
        <begin position="911"/>
        <end position="916"/>
    </location>
</feature>
<feature type="helix" evidence="30">
    <location>
        <begin position="921"/>
        <end position="933"/>
    </location>
</feature>
<feature type="strand" evidence="30">
    <location>
        <begin position="941"/>
        <end position="946"/>
    </location>
</feature>
<feature type="helix" evidence="30">
    <location>
        <begin position="951"/>
        <end position="961"/>
    </location>
</feature>
<feature type="strand" evidence="30">
    <location>
        <begin position="969"/>
        <end position="971"/>
    </location>
</feature>
<feature type="strand" evidence="30">
    <location>
        <begin position="975"/>
        <end position="977"/>
    </location>
</feature>
<feature type="helix" evidence="30">
    <location>
        <begin position="981"/>
        <end position="993"/>
    </location>
</feature>
<feature type="strand" evidence="30">
    <location>
        <begin position="999"/>
        <end position="1001"/>
    </location>
</feature>
<feature type="strand" evidence="30">
    <location>
        <begin position="1008"/>
        <end position="1010"/>
    </location>
</feature>
<feature type="helix" evidence="30">
    <location>
        <begin position="1012"/>
        <end position="1015"/>
    </location>
</feature>
<feature type="strand" evidence="30">
    <location>
        <begin position="1018"/>
        <end position="1022"/>
    </location>
</feature>
<gene>
    <name type="primary">Nlrc4</name>
    <name type="synonym">Card12</name>
    <name type="synonym">Ipaf</name>
</gene>
<keyword id="KW-0002">3D-structure</keyword>
<keyword id="KW-0053">Apoptosis</keyword>
<keyword id="KW-0067">ATP-binding</keyword>
<keyword id="KW-0963">Cytoplasm</keyword>
<keyword id="KW-0391">Immunity</keyword>
<keyword id="KW-1271">Inflammasome</keyword>
<keyword id="KW-0395">Inflammatory response</keyword>
<keyword id="KW-0399">Innate immunity</keyword>
<keyword id="KW-0433">Leucine-rich repeat</keyword>
<keyword id="KW-0547">Nucleotide-binding</keyword>
<keyword id="KW-0597">Phosphoprotein</keyword>
<keyword id="KW-1185">Reference proteome</keyword>
<keyword id="KW-0677">Repeat</keyword>
<organism>
    <name type="scientific">Mus musculus</name>
    <name type="common">Mouse</name>
    <dbReference type="NCBI Taxonomy" id="10090"/>
    <lineage>
        <taxon>Eukaryota</taxon>
        <taxon>Metazoa</taxon>
        <taxon>Chordata</taxon>
        <taxon>Craniata</taxon>
        <taxon>Vertebrata</taxon>
        <taxon>Euteleostomi</taxon>
        <taxon>Mammalia</taxon>
        <taxon>Eutheria</taxon>
        <taxon>Euarchontoglires</taxon>
        <taxon>Glires</taxon>
        <taxon>Rodentia</taxon>
        <taxon>Myomorpha</taxon>
        <taxon>Muroidea</taxon>
        <taxon>Muridae</taxon>
        <taxon>Murinae</taxon>
        <taxon>Mus</taxon>
        <taxon>Mus</taxon>
    </lineage>
</organism>
<evidence type="ECO:0000250" key="1">
    <source>
        <dbReference type="UniProtKB" id="Q9NPP4"/>
    </source>
</evidence>
<evidence type="ECO:0000255" key="2">
    <source>
        <dbReference type="PROSITE-ProRule" id="PRU00046"/>
    </source>
</evidence>
<evidence type="ECO:0000255" key="3">
    <source>
        <dbReference type="PROSITE-ProRule" id="PRU00136"/>
    </source>
</evidence>
<evidence type="ECO:0000269" key="4">
    <source>
    </source>
</evidence>
<evidence type="ECO:0000269" key="5">
    <source>
    </source>
</evidence>
<evidence type="ECO:0000269" key="6">
    <source>
    </source>
</evidence>
<evidence type="ECO:0000269" key="7">
    <source>
    </source>
</evidence>
<evidence type="ECO:0000269" key="8">
    <source>
    </source>
</evidence>
<evidence type="ECO:0000269" key="9">
    <source>
    </source>
</evidence>
<evidence type="ECO:0000269" key="10">
    <source>
    </source>
</evidence>
<evidence type="ECO:0000269" key="11">
    <source>
    </source>
</evidence>
<evidence type="ECO:0000269" key="12">
    <source>
    </source>
</evidence>
<evidence type="ECO:0000269" key="13">
    <source>
    </source>
</evidence>
<evidence type="ECO:0000269" key="14">
    <source>
    </source>
</evidence>
<evidence type="ECO:0000269" key="15">
    <source>
    </source>
</evidence>
<evidence type="ECO:0000269" key="16">
    <source>
    </source>
</evidence>
<evidence type="ECO:0000269" key="17">
    <source>
    </source>
</evidence>
<evidence type="ECO:0000269" key="18">
    <source>
    </source>
</evidence>
<evidence type="ECO:0000269" key="19">
    <source>
    </source>
</evidence>
<evidence type="ECO:0000269" key="20">
    <source>
    </source>
</evidence>
<evidence type="ECO:0000269" key="21">
    <source>
    </source>
</evidence>
<evidence type="ECO:0000269" key="22">
    <source>
    </source>
</evidence>
<evidence type="ECO:0000269" key="23">
    <source>
    </source>
</evidence>
<evidence type="ECO:0000269" key="24">
    <source>
    </source>
</evidence>
<evidence type="ECO:0000305" key="25"/>
<evidence type="ECO:0007744" key="26">
    <source>
        <dbReference type="PDB" id="3JBL"/>
    </source>
</evidence>
<evidence type="ECO:0007744" key="27">
    <source>
        <dbReference type="PDB" id="4KXF"/>
    </source>
</evidence>
<evidence type="ECO:0007744" key="28">
    <source>
        <dbReference type="PDB" id="5AJ2"/>
    </source>
</evidence>
<evidence type="ECO:0007744" key="29">
    <source>
        <dbReference type="PDB" id="6B5B"/>
    </source>
</evidence>
<evidence type="ECO:0007829" key="30">
    <source>
        <dbReference type="PDB" id="4KXF"/>
    </source>
</evidence>
<comment type="function">
    <text evidence="4 5 6 8 9 10 11 13 14 15 16 17 18 19 23 24">Key component of inflammasomes that indirectly senses specific proteins from pathogenic bacteria and fungi and responds by assembling an inflammasome complex that promotes caspase-1 activation, cytokine production and macrophage pyroptosis. The NLRC4 inflammasome is activated as part of the innate immune response to a range of intracellular bacteria. It senses pathogenic proteins of the type III secretion system (T3SS) and type IV secretion system (T4SS) such as flagellin and PrgJ-like rod proteins via the Naip proteins (Naip1, Naip2 or Naip5): specific Naip proteins recognize and bind pathogenic proteins, driving assembly and activation of the NLRC4 inflammasome. The NLRC4 inflammasome senses Gram-negative bacteria such as L.pneumophila and P.aeruginosa, enteric pathogens S.typhimurium (Salmonella) and S.flexneri and fungal pathogen C.albicans. In intestine, the NLRC4 inflammasome is able to discriminate between commensal and pathogenic bacteria and specifically drives production of interleukin-1 beta (IL1B) in response to infection by Salmonella or P.aeruginosa. In case of L.pneumophila infection the inflammasome acts by activating caspase-7.</text>
</comment>
<comment type="subunit">
    <text evidence="1 12 13 14 20 21 22 23">Homooligomer; homooligomerizes following activation of Naip proteins by pathogenic proteins such as S.typhimurium (Salmonella) flagellin or PrgJ (PubMed:23765277, PubMed:26449474, PubMed:26585513, PubMed:29146805). Component of the NLRC4 inflammasome, at least composed of NLRC4, caspase-1 (CASP1) and some NAIP protein (Naip, Naip2 or Naip5) (PubMed:21874021, PubMed:21918512, PubMed:26585513). Interacts with Naip5 and Naip6; following Naip5 and Naip6 engagement by Salmonella flagellin (PubMed:21874021, PubMed:21918512, PubMed:29146805, PubMed:29182158). Interacts with Naip2; following Naip2 engagement by Salmonella PrgJ (PubMed:21874021, PubMed:21918512, PubMed:26449474). The inflammasome is a huge complex that contains multiple copies of NLRC4 and a single Naip protein chain (PubMed:26449474, PubMed:29146805). Some NLRC4 inflammasomes contain PYCARD/ASC, while some others directly contact and activate CASP1 (PubMed:21147462). Interacts with EIF2AK2/PKR (By similarity).</text>
</comment>
<comment type="interaction">
    <interactant intactId="EBI-16006652">
        <id>Q3UP24</id>
    </interactant>
    <interactant intactId="EBI-489700">
        <id>P29452</id>
        <label>Casp1</label>
    </interactant>
    <organismsDiffer>false</organismsDiffer>
    <experiments>2</experiments>
</comment>
<comment type="interaction">
    <interactant intactId="EBI-16006652">
        <id>Q3UP24</id>
    </interactant>
    <interactant intactId="EBI-15944130">
        <id>Q9R016</id>
        <label>Naip5</label>
    </interactant>
    <organismsDiffer>false</organismsDiffer>
    <experiments>18</experiments>
</comment>
<comment type="interaction">
    <interactant intactId="EBI-16006652">
        <id>Q3UP24</id>
    </interactant>
    <interactant intactId="EBI-16006652">
        <id>Q3UP24</id>
        <label>Nlrc4</label>
    </interactant>
    <organismsDiffer>false</organismsDiffer>
    <experiments>4</experiments>
</comment>
<comment type="subcellular location">
    <subcellularLocation>
        <location evidence="19">Cytoplasm</location>
        <location evidence="19">Cytosol</location>
    </subcellularLocation>
    <subcellularLocation>
        <location evidence="13 14 22">Inflammasome</location>
    </subcellularLocation>
</comment>
<comment type="tissue specificity">
    <text evidence="17">Expressed by intestinal mononuclear phagocytes.</text>
</comment>
<comment type="domain">
    <text evidence="20">In an autoinhibited form the C-terminal leucine-rich repeat (LRR) domain is positioned to sterically occlude one side of the NBD domain and consequently sequester NLRC4 in a monomeric state. An ADP-mediated interaction between the NBD and the WHD also contributes to the autoinhibition (PubMed:23765277).</text>
</comment>
<comment type="PTM">
    <text evidence="19 20">Phosphorylated at Ser-533 following infection of macrophages with S.typhimurium (Salmonella). Phosphorylation is essential for NLRC4 inflammasome function to promote caspase-1 activation and pyroptosis. PRKCD phosphorylates Ser-533 in vitro.</text>
</comment>
<comment type="disruption phenotype">
    <text evidence="4 7 17">Mice show defects in inflammasome function in response to S.typhimurium (Salmonella) infection. Differences are however observed depending on the strain background: in a C57BL/6J strain background, no striking differences are observed compared to wild-type mice following Salmonella infection. While in a BALB/c strain background, mice are highly susceptible to orogastric but not intraperitoneal infection with Salmonella: enhanced lethality is preceded by impaired expression of endothelial adhesion molecules, lower neutrophil recruitment and poor intestinal pathogen clearance.</text>
</comment>
<accession>Q3UP24</accession>
<accession>Q3TAU8</accession>
<sequence>MNFIRNNRRALIQRMGLTVTKQICDDLFALNVLNNQEANVIYCEPLEQEAARKIIHMTMQKGSAACNLFLKSLENWDYFVYQDLTGQNLSYQVTEEDLNVLAQNLKDLYNSPAFLNFYPLGEDIDIIFNLEKTFTEPIMWKKDHRHHRVEQLTLGSLLEALKSPCLIEGESGKGKSTLLQRIAMLWASGGCRALKGFRLVFFIHLRSARGGLFETLYDQLLNIPDFISKPTFKALLLKLHKEVLFLLDGYNEFHPQNCPEIEALIKENHRFKNMVIVTTTTECLRHIRHVGALTAEVGDMTEDSAKDLIEAVLVPDQVERLWAQIQESRCLRNLMKTPLFVVITCAIQMGRQEFQAHTQTMLFQTFYDLLIQKNSHRYRGGASGDFARSLDYCGDLALEGVFAHKFDFEPEHGSSMNEDVLVTIGLLCKYTAQRLKPTYKFFHKSFQEYTAGRRLSSLLTSKEPEEVSKGNSYLNKMVSISDITSLYGNLLLYTCGSSTEATRAVMRHLAMVYQHGSLQGLSVTKRPLWRQESIQSLRNTTEQDVLKAINVNSFVECGINLFSESMSKSDLSQEFEAFFQGKSLYINSENIPDYLFDFFEYLPNCASALDFVKLDFYERATESQDKAEENVPGVHTEGPSETYIPPRAVSLFFNWKQEFKTLEVTLRDINKLNKQDIKYLGKIFSSATNLRLHIKRCAAMAGRLSSVLRTCKNMHTLMVEASPLTTDDEQYITSVTGLQNLSIHRLHTQQLPGGLIDSLGNLKNLERLILDDIRMNEEDAKNLAEGLRSLKKMRLLHLTHLSDIGEGMDYIVKSLSEESCDLQEMKLVACCLTANSVKVLAQNLHNLIKLSILDISENYLEKDGNEALQELIGRLGVLGELTTLMLPWCWDVHTSLPKLLKQLEGTPGLAKLGLKNWRLRDEEIKSLGEFLEMNPLRDLQQLDLAGHCVSSDGWLYFMNVFENLKQLVFFDFSTEEFLPDAALVRKLSQVLSKLTLLQEVKLTGWEFDDYDISAIKGTFKLVTA</sequence>
<protein>
    <recommendedName>
        <fullName>NLR family CARD domain-containing protein 4</fullName>
    </recommendedName>
    <alternativeName>
        <fullName>Caspase recruitment domain-containing protein 12</fullName>
    </alternativeName>
    <alternativeName>
        <fullName>Ice protease-activating factor</fullName>
        <shortName>Ipaf</shortName>
    </alternativeName>
</protein>
<proteinExistence type="evidence at protein level"/>
<reference key="1">
    <citation type="journal article" date="2005" name="Science">
        <title>The transcriptional landscape of the mammalian genome.</title>
        <authorList>
            <person name="Carninci P."/>
            <person name="Kasukawa T."/>
            <person name="Katayama S."/>
            <person name="Gough J."/>
            <person name="Frith M.C."/>
            <person name="Maeda N."/>
            <person name="Oyama R."/>
            <person name="Ravasi T."/>
            <person name="Lenhard B."/>
            <person name="Wells C."/>
            <person name="Kodzius R."/>
            <person name="Shimokawa K."/>
            <person name="Bajic V.B."/>
            <person name="Brenner S.E."/>
            <person name="Batalov S."/>
            <person name="Forrest A.R."/>
            <person name="Zavolan M."/>
            <person name="Davis M.J."/>
            <person name="Wilming L.G."/>
            <person name="Aidinis V."/>
            <person name="Allen J.E."/>
            <person name="Ambesi-Impiombato A."/>
            <person name="Apweiler R."/>
            <person name="Aturaliya R.N."/>
            <person name="Bailey T.L."/>
            <person name="Bansal M."/>
            <person name="Baxter L."/>
            <person name="Beisel K.W."/>
            <person name="Bersano T."/>
            <person name="Bono H."/>
            <person name="Chalk A.M."/>
            <person name="Chiu K.P."/>
            <person name="Choudhary V."/>
            <person name="Christoffels A."/>
            <person name="Clutterbuck D.R."/>
            <person name="Crowe M.L."/>
            <person name="Dalla E."/>
            <person name="Dalrymple B.P."/>
            <person name="de Bono B."/>
            <person name="Della Gatta G."/>
            <person name="di Bernardo D."/>
            <person name="Down T."/>
            <person name="Engstrom P."/>
            <person name="Fagiolini M."/>
            <person name="Faulkner G."/>
            <person name="Fletcher C.F."/>
            <person name="Fukushima T."/>
            <person name="Furuno M."/>
            <person name="Futaki S."/>
            <person name="Gariboldi M."/>
            <person name="Georgii-Hemming P."/>
            <person name="Gingeras T.R."/>
            <person name="Gojobori T."/>
            <person name="Green R.E."/>
            <person name="Gustincich S."/>
            <person name="Harbers M."/>
            <person name="Hayashi Y."/>
            <person name="Hensch T.K."/>
            <person name="Hirokawa N."/>
            <person name="Hill D."/>
            <person name="Huminiecki L."/>
            <person name="Iacono M."/>
            <person name="Ikeo K."/>
            <person name="Iwama A."/>
            <person name="Ishikawa T."/>
            <person name="Jakt M."/>
            <person name="Kanapin A."/>
            <person name="Katoh M."/>
            <person name="Kawasawa Y."/>
            <person name="Kelso J."/>
            <person name="Kitamura H."/>
            <person name="Kitano H."/>
            <person name="Kollias G."/>
            <person name="Krishnan S.P."/>
            <person name="Kruger A."/>
            <person name="Kummerfeld S.K."/>
            <person name="Kurochkin I.V."/>
            <person name="Lareau L.F."/>
            <person name="Lazarevic D."/>
            <person name="Lipovich L."/>
            <person name="Liu J."/>
            <person name="Liuni S."/>
            <person name="McWilliam S."/>
            <person name="Madan Babu M."/>
            <person name="Madera M."/>
            <person name="Marchionni L."/>
            <person name="Matsuda H."/>
            <person name="Matsuzawa S."/>
            <person name="Miki H."/>
            <person name="Mignone F."/>
            <person name="Miyake S."/>
            <person name="Morris K."/>
            <person name="Mottagui-Tabar S."/>
            <person name="Mulder N."/>
            <person name="Nakano N."/>
            <person name="Nakauchi H."/>
            <person name="Ng P."/>
            <person name="Nilsson R."/>
            <person name="Nishiguchi S."/>
            <person name="Nishikawa S."/>
            <person name="Nori F."/>
            <person name="Ohara O."/>
            <person name="Okazaki Y."/>
            <person name="Orlando V."/>
            <person name="Pang K.C."/>
            <person name="Pavan W.J."/>
            <person name="Pavesi G."/>
            <person name="Pesole G."/>
            <person name="Petrovsky N."/>
            <person name="Piazza S."/>
            <person name="Reed J."/>
            <person name="Reid J.F."/>
            <person name="Ring B.Z."/>
            <person name="Ringwald M."/>
            <person name="Rost B."/>
            <person name="Ruan Y."/>
            <person name="Salzberg S.L."/>
            <person name="Sandelin A."/>
            <person name="Schneider C."/>
            <person name="Schoenbach C."/>
            <person name="Sekiguchi K."/>
            <person name="Semple C.A."/>
            <person name="Seno S."/>
            <person name="Sessa L."/>
            <person name="Sheng Y."/>
            <person name="Shibata Y."/>
            <person name="Shimada H."/>
            <person name="Shimada K."/>
            <person name="Silva D."/>
            <person name="Sinclair B."/>
            <person name="Sperling S."/>
            <person name="Stupka E."/>
            <person name="Sugiura K."/>
            <person name="Sultana R."/>
            <person name="Takenaka Y."/>
            <person name="Taki K."/>
            <person name="Tammoja K."/>
            <person name="Tan S.L."/>
            <person name="Tang S."/>
            <person name="Taylor M.S."/>
            <person name="Tegner J."/>
            <person name="Teichmann S.A."/>
            <person name="Ueda H.R."/>
            <person name="van Nimwegen E."/>
            <person name="Verardo R."/>
            <person name="Wei C.L."/>
            <person name="Yagi K."/>
            <person name="Yamanishi H."/>
            <person name="Zabarovsky E."/>
            <person name="Zhu S."/>
            <person name="Zimmer A."/>
            <person name="Hide W."/>
            <person name="Bult C."/>
            <person name="Grimmond S.M."/>
            <person name="Teasdale R.D."/>
            <person name="Liu E.T."/>
            <person name="Brusic V."/>
            <person name="Quackenbush J."/>
            <person name="Wahlestedt C."/>
            <person name="Mattick J.S."/>
            <person name="Hume D.A."/>
            <person name="Kai C."/>
            <person name="Sasaki D."/>
            <person name="Tomaru Y."/>
            <person name="Fukuda S."/>
            <person name="Kanamori-Katayama M."/>
            <person name="Suzuki M."/>
            <person name="Aoki J."/>
            <person name="Arakawa T."/>
            <person name="Iida J."/>
            <person name="Imamura K."/>
            <person name="Itoh M."/>
            <person name="Kato T."/>
            <person name="Kawaji H."/>
            <person name="Kawagashira N."/>
            <person name="Kawashima T."/>
            <person name="Kojima M."/>
            <person name="Kondo S."/>
            <person name="Konno H."/>
            <person name="Nakano K."/>
            <person name="Ninomiya N."/>
            <person name="Nishio T."/>
            <person name="Okada M."/>
            <person name="Plessy C."/>
            <person name="Shibata K."/>
            <person name="Shiraki T."/>
            <person name="Suzuki S."/>
            <person name="Tagami M."/>
            <person name="Waki K."/>
            <person name="Watahiki A."/>
            <person name="Okamura-Oho Y."/>
            <person name="Suzuki H."/>
            <person name="Kawai J."/>
            <person name="Hayashizaki Y."/>
        </authorList>
    </citation>
    <scope>NUCLEOTIDE SEQUENCE [LARGE SCALE MRNA]</scope>
    <source>
        <strain>C57BL/6J</strain>
        <strain>NOD</strain>
        <tissue>Spleen</tissue>
    </source>
</reference>
<reference key="2">
    <citation type="journal article" date="2009" name="PLoS Biol.">
        <title>Lineage-specific biology revealed by a finished genome assembly of the mouse.</title>
        <authorList>
            <person name="Church D.M."/>
            <person name="Goodstadt L."/>
            <person name="Hillier L.W."/>
            <person name="Zody M.C."/>
            <person name="Goldstein S."/>
            <person name="She X."/>
            <person name="Bult C.J."/>
            <person name="Agarwala R."/>
            <person name="Cherry J.L."/>
            <person name="DiCuccio M."/>
            <person name="Hlavina W."/>
            <person name="Kapustin Y."/>
            <person name="Meric P."/>
            <person name="Maglott D."/>
            <person name="Birtle Z."/>
            <person name="Marques A.C."/>
            <person name="Graves T."/>
            <person name="Zhou S."/>
            <person name="Teague B."/>
            <person name="Potamousis K."/>
            <person name="Churas C."/>
            <person name="Place M."/>
            <person name="Herschleb J."/>
            <person name="Runnheim R."/>
            <person name="Forrest D."/>
            <person name="Amos-Landgraf J."/>
            <person name="Schwartz D.C."/>
            <person name="Cheng Z."/>
            <person name="Lindblad-Toh K."/>
            <person name="Eichler E.E."/>
            <person name="Ponting C.P."/>
        </authorList>
    </citation>
    <scope>NUCLEOTIDE SEQUENCE [LARGE SCALE GENOMIC DNA]</scope>
    <source>
        <strain>C57BL/6J</strain>
    </source>
</reference>
<reference key="3">
    <citation type="journal article" date="2006" name="J. Exp. Med.">
        <title>Role of the caspase-1 inflammasome in Salmonella typhimurium pathogenesis.</title>
        <authorList>
            <person name="Lara-Tejero M."/>
            <person name="Sutterwala F.S."/>
            <person name="Ogura Y."/>
            <person name="Grant E.P."/>
            <person name="Bertin J."/>
            <person name="Coyle A.J."/>
            <person name="Flavell R.A."/>
            <person name="Galan J.E."/>
        </authorList>
    </citation>
    <scope>DISRUPTION PHENOTYPE</scope>
</reference>
<reference key="4">
    <citation type="journal article" date="2004" name="Nature">
        <title>Differential activation of the inflammasome by caspase-1 adaptors ASC and Ipaf.</title>
        <authorList>
            <person name="Mariathasan S."/>
            <person name="Newton K."/>
            <person name="Monack D.M."/>
            <person name="Vucic D."/>
            <person name="French D.M."/>
            <person name="Lee W.P."/>
            <person name="Roose-Girma M."/>
            <person name="Erickson S."/>
            <person name="Dixit V.M."/>
        </authorList>
    </citation>
    <scope>FUNCTION</scope>
    <scope>DISRUPTION PHENOTYPE</scope>
</reference>
<reference key="5">
    <citation type="journal article" date="2006" name="Nat. Immunol.">
        <title>Cytoplasmic flagellin activates caspase-1 and secretion of interleukin 1beta via Ipaf.</title>
        <authorList>
            <person name="Miao E.A."/>
            <person name="Alpuche-Aranda C.M."/>
            <person name="Dors M."/>
            <person name="Clark A.E."/>
            <person name="Bader M.W."/>
            <person name="Miller S.I."/>
            <person name="Aderem A."/>
        </authorList>
    </citation>
    <scope>FUNCTION</scope>
</reference>
<reference key="6">
    <citation type="journal article" date="2006" name="Nat. Immunol.">
        <title>Cytosolic flagellin requires Ipaf for activation of caspase-1 and interleukin 1beta in salmonella-infected macrophages.</title>
        <authorList>
            <person name="Franchi L."/>
            <person name="Amer A."/>
            <person name="Body-Malapel M."/>
            <person name="Kanneganti T.D."/>
            <person name="Ozoren N."/>
            <person name="Jagirdar R."/>
            <person name="Inohara N."/>
            <person name="Vandenabeele P."/>
            <person name="Bertin J."/>
            <person name="Coyle A."/>
            <person name="Grant E.P."/>
            <person name="Nunez G."/>
        </authorList>
    </citation>
    <scope>FUNCTION</scope>
</reference>
<reference key="7">
    <citation type="journal article" date="2007" name="J. Exp. Med.">
        <title>Immune recognition of Pseudomonas aeruginosa mediated by the IPAF/NLRC4 inflammasome.</title>
        <authorList>
            <person name="Sutterwala F.S."/>
            <person name="Mijares L.A."/>
            <person name="Li L."/>
            <person name="Ogura Y."/>
            <person name="Kazmierczak B.I."/>
            <person name="Flavell R.A."/>
        </authorList>
    </citation>
    <scope>FUNCTION</scope>
</reference>
<reference key="8">
    <citation type="journal article" date="2009" name="PLoS Pathog.">
        <title>Caspase-7 activation by the Nlrc4/Ipaf inflammasome restricts Legionella infection.</title>
        <authorList>
            <person name="Akhter A."/>
            <person name="Gavrilin M.A."/>
            <person name="Frantz L."/>
            <person name="Washington S."/>
            <person name="Ditty C."/>
            <person name="Limoli D."/>
            <person name="Day C."/>
            <person name="Sarkar A."/>
            <person name="Newland C."/>
            <person name="Butchar J."/>
            <person name="Marsh C.B."/>
            <person name="Wewers M.D."/>
            <person name="Tridandapani S."/>
            <person name="Kanneganti T.D."/>
            <person name="Amer A.O."/>
        </authorList>
    </citation>
    <scope>FUNCTION</scope>
</reference>
<reference key="9">
    <citation type="journal article" date="2010" name="Cell">
        <title>A tissue-specific atlas of mouse protein phosphorylation and expression.</title>
        <authorList>
            <person name="Huttlin E.L."/>
            <person name="Jedrychowski M.P."/>
            <person name="Elias J.E."/>
            <person name="Goswami T."/>
            <person name="Rad R."/>
            <person name="Beausoleil S.A."/>
            <person name="Villen J."/>
            <person name="Haas W."/>
            <person name="Sowa M.E."/>
            <person name="Gygi S.P."/>
        </authorList>
    </citation>
    <scope>IDENTIFICATION BY MASS SPECTROMETRY [LARGE SCALE ANALYSIS]</scope>
    <source>
        <tissue>Spleen</tissue>
    </source>
</reference>
<reference key="10">
    <citation type="journal article" date="2010" name="Cell Host Microbe">
        <title>Differential requirement for Caspase-1 autoproteolysis in pathogen-induced cell death and cytokine processing.</title>
        <authorList>
            <person name="Broz P."/>
            <person name="von Moltke J."/>
            <person name="Jones J.W."/>
            <person name="Vance R.E."/>
            <person name="Monack D.M."/>
        </authorList>
    </citation>
    <scope>SUBUNIT</scope>
</reference>
<reference key="11">
    <citation type="journal article" date="2010" name="J. Exp. Med.">
        <title>Redundant roles for inflammasome receptors NLRP3 and NLRC4 in host defense against Salmonella.</title>
        <authorList>
            <person name="Broz P."/>
            <person name="Newton K."/>
            <person name="Lamkanfi M."/>
            <person name="Mariathasan S."/>
            <person name="Dixit V.M."/>
            <person name="Monack D.M."/>
        </authorList>
    </citation>
    <scope>FUNCTION</scope>
</reference>
<reference key="12">
    <citation type="journal article" date="2010" name="Proc. Natl. Acad. Sci. U.S.A.">
        <title>Innate immune detection of the type III secretion apparatus through the NLRC4 inflammasome.</title>
        <authorList>
            <person name="Miao E.A."/>
            <person name="Mao D.P."/>
            <person name="Yudkovsky N."/>
            <person name="Bonneau R."/>
            <person name="Lorang C.G."/>
            <person name="Warren S.E."/>
            <person name="Leaf I.A."/>
            <person name="Aderem A."/>
        </authorList>
    </citation>
    <scope>FUNCTION</scope>
</reference>
<reference key="13">
    <citation type="journal article" date="2011" name="Nature">
        <title>Innate immune recognition of bacterial ligands by NAIPs determines inflammasome specificity.</title>
        <authorList>
            <person name="Kofoed E.M."/>
            <person name="Vance R.E."/>
        </authorList>
    </citation>
    <scope>FUNCTION</scope>
    <scope>SUBUNIT</scope>
    <scope>SUBCELLULAR LOCATION</scope>
    <scope>INTERACTION WITH NAIP2; NAIP5 AND NAIP6</scope>
</reference>
<reference key="14">
    <citation type="journal article" date="2011" name="Nature">
        <title>The NLRC4 inflammasome receptors for bacterial flagellin and type III secretion apparatus.</title>
        <authorList>
            <person name="Zhao Y."/>
            <person name="Yang J."/>
            <person name="Shi J."/>
            <person name="Gong Y.N."/>
            <person name="Lu Q."/>
            <person name="Xu H."/>
            <person name="Liu L."/>
            <person name="Shao F."/>
        </authorList>
    </citation>
    <scope>FUNCTION</scope>
    <scope>SUBCELLULAR LOCATION</scope>
    <scope>INTERACTION WITH NAIP2 AND NAIP5</scope>
</reference>
<reference key="15">
    <citation type="journal article" date="2011" name="PLoS Pathog.">
        <title>A novel role for the NLRC4 inflammasome in mucosal defenses against the fungal pathogen Candida albicans.</title>
        <authorList>
            <person name="Tomalka J."/>
            <person name="Ganesan S."/>
            <person name="Azodi E."/>
            <person name="Patel K."/>
            <person name="Majmudar P."/>
            <person name="Hall B.A."/>
            <person name="Fitzgerald K.A."/>
            <person name="Hise A.G."/>
        </authorList>
    </citation>
    <scope>FUNCTION</scope>
</reference>
<reference key="16">
    <citation type="journal article" date="2012" name="J. Immunol.">
        <title>NLRC4 inflammasome-mediated production of IL-1beta modulates mucosal immunity in the lung against gram-negative bacterial infection.</title>
        <authorList>
            <person name="Cai S."/>
            <person name="Batra S."/>
            <person name="Wakamatsu N."/>
            <person name="Pacher P."/>
            <person name="Jeyaseelan S."/>
        </authorList>
    </citation>
    <scope>FUNCTION</scope>
</reference>
<reference key="17">
    <citation type="journal article" date="2012" name="Nat. Immunol.">
        <title>NLRC4 inflammasomes in dendritic cells regulate noncognate effector function by memory CD8(+) T cells.</title>
        <authorList>
            <person name="Kupz A."/>
            <person name="Guarda G."/>
            <person name="Gebhardt T."/>
            <person name="Sander L.E."/>
            <person name="Short K.R."/>
            <person name="Diavatopoulos D.A."/>
            <person name="Wijburg O.L."/>
            <person name="Cao H."/>
            <person name="Waithman J.C."/>
            <person name="Chen W."/>
            <person name="Fernandez-Ruiz D."/>
            <person name="Whitney P.G."/>
            <person name="Heath W.R."/>
            <person name="Curtiss R. III"/>
            <person name="Tschopp J."/>
            <person name="Strugnell R.A."/>
            <person name="Bedoui S."/>
        </authorList>
    </citation>
    <scope>FUNCTION</scope>
</reference>
<reference key="18">
    <citation type="journal article" date="2012" name="Nat. Immunol.">
        <title>NLRC4-driven production of IL-1beta discriminates between pathogenic and commensal bacteria and promotes host intestinal defense.</title>
        <authorList>
            <person name="Franchi L."/>
            <person name="Kamada N."/>
            <person name="Nakamura Y."/>
            <person name="Burberry A."/>
            <person name="Kuffa P."/>
            <person name="Suzuki S."/>
            <person name="Shaw M.H."/>
            <person name="Kim Y.G."/>
            <person name="Nunez G."/>
        </authorList>
    </citation>
    <scope>FUNCTION</scope>
    <scope>DISRUPTION PHENOTYPE</scope>
    <scope>TISSUE SPECIFICITY</scope>
</reference>
<reference key="19">
    <citation type="journal article" date="2012" name="Nature">
        <title>Phosphorylation of NLRC4 is critical for inflammasome activation.</title>
        <authorList>
            <person name="Qu Y."/>
            <person name="Misaghi S."/>
            <person name="Izrael-Tomasevic A."/>
            <person name="Newton K."/>
            <person name="Gilmour L.L."/>
            <person name="Lamkanfi M."/>
            <person name="Louie S."/>
            <person name="Kayagaki N."/>
            <person name="Liu J."/>
            <person name="Komuves L."/>
            <person name="Cupp J.E."/>
            <person name="Arnott D."/>
            <person name="Monack D."/>
            <person name="Dixit V.M."/>
        </authorList>
    </citation>
    <scope>FUNCTION</scope>
    <scope>SUBCELLULAR LOCATION</scope>
    <scope>PHOSPHORYLATION AT SER-533</scope>
    <scope>MUTAGENESIS OF SER-533</scope>
</reference>
<reference key="20">
    <citation type="journal article" date="2018" name="Cell Res.">
        <title>Structural basis for specific flagellin recognition by the NLR protein NAIP5.</title>
        <authorList>
            <person name="Yang X."/>
            <person name="Yang F."/>
            <person name="Wang W."/>
            <person name="Lin G."/>
            <person name="Hu Z."/>
            <person name="Han Z."/>
            <person name="Qi Y."/>
            <person name="Zhang L."/>
            <person name="Wang J."/>
            <person name="Sui S.F."/>
            <person name="Chai J."/>
        </authorList>
    </citation>
    <scope>FUNCTION</scope>
    <scope>SUBUNIT</scope>
</reference>
<reference key="21">
    <citation type="journal article" date="2013" name="Science">
        <title>Crystal structure of NLRC4 reveals its autoinhibition mechanism.</title>
        <authorList>
            <person name="Hu Z."/>
            <person name="Yan C."/>
            <person name="Liu P."/>
            <person name="Huang Z."/>
            <person name="Ma R."/>
            <person name="Zhang C."/>
            <person name="Wang R."/>
            <person name="Zhang Y."/>
            <person name="Martinon F."/>
            <person name="Miao D."/>
            <person name="Deng H."/>
            <person name="Wang J."/>
            <person name="Chang J."/>
            <person name="Chai J."/>
        </authorList>
    </citation>
    <scope>X-RAY CRYSTALLOGRAPHY (3.2 ANGSTROMS) OF 93-1024 IN COMPLEX WITH ADP</scope>
    <scope>NBD DOMAIN</scope>
    <scope>WHD DOMAIN</scope>
    <scope>LRR REPEATS</scope>
    <scope>PHOSPHORYLATION AT SER-533</scope>
    <scope>MUTAGENESIS OF HIS-443</scope>
</reference>
<reference evidence="26" key="22">
    <citation type="journal article" date="2015" name="Science">
        <title>Cryo-EM structure of the activated NAIP2-NLRC4 inflammasome reveals nucleated polymerization.</title>
        <authorList>
            <person name="Zhang L."/>
            <person name="Chen S."/>
            <person name="Ruan J."/>
            <person name="Wu J."/>
            <person name="Tong A.B."/>
            <person name="Yin Q."/>
            <person name="Li Y."/>
            <person name="David L."/>
            <person name="Lu A."/>
            <person name="Wang W.L."/>
            <person name="Marks C."/>
            <person name="Ouyang Q."/>
            <person name="Zhang X."/>
            <person name="Mao Y."/>
            <person name="Wu H."/>
        </authorList>
    </citation>
    <scope>STRUCTURE BY ELECTRON MICROSCOPY (4.50 ANGSTROMS) OF 93-1024</scope>
    <scope>SUBUNIT</scope>
</reference>
<reference evidence="28" key="23">
    <citation type="journal article" date="2015" name="Structure">
        <title>Cryoelectron Tomography of the NAIP5/NLRC4 Inflammasome: Implications for NLR Activation.</title>
        <authorList>
            <person name="Diebolder C.A."/>
            <person name="Halff E.F."/>
            <person name="Koster A.J."/>
            <person name="Huizinga E.G."/>
            <person name="Koning R.I."/>
        </authorList>
    </citation>
    <scope>STRUCTURE BY ELECTRON MICROSCOPY (40.00 ANGSTROMS)</scope>
    <scope>SUBUNIT</scope>
    <scope>SUBCELLULAR LOCATION</scope>
</reference>
<reference evidence="29" key="24">
    <citation type="journal article" date="2017" name="Science">
        <title>The structural basis of flagellin detection by NAIP5: A strategy to limit pathogen immune evasion.</title>
        <authorList>
            <person name="Tenthorey J.L."/>
            <person name="Haloupek N."/>
            <person name="Lopez-Blanco J.R."/>
            <person name="Grob P."/>
            <person name="Adamson E."/>
            <person name="Hartenian E."/>
            <person name="Lind N.A."/>
            <person name="Bourgeois N.M."/>
            <person name="Chacon P."/>
            <person name="Nogales E."/>
            <person name="Vance R.E."/>
        </authorList>
    </citation>
    <scope>STRUCTURE BY ELECTRON MICROSCOPY (5.20 ANGSTROMS)</scope>
    <scope>FUNCTION</scope>
    <scope>SUBUNIT</scope>
</reference>
<name>NLRC4_MOUSE</name>